<accession>C0PY69</accession>
<keyword id="KW-0963">Cytoplasm</keyword>
<keyword id="KW-0479">Metal-binding</keyword>
<keyword id="KW-0862">Zinc</keyword>
<evidence type="ECO:0000255" key="1">
    <source>
        <dbReference type="HAMAP-Rule" id="MF_00746"/>
    </source>
</evidence>
<feature type="chain" id="PRO_1000148335" description="Protein SprT">
    <location>
        <begin position="1"/>
        <end position="165"/>
    </location>
</feature>
<feature type="domain" description="SprT-like" evidence="1">
    <location>
        <begin position="22"/>
        <end position="163"/>
    </location>
</feature>
<feature type="active site" evidence="1">
    <location>
        <position position="79"/>
    </location>
</feature>
<feature type="binding site" evidence="1">
    <location>
        <position position="78"/>
    </location>
    <ligand>
        <name>Zn(2+)</name>
        <dbReference type="ChEBI" id="CHEBI:29105"/>
    </ligand>
</feature>
<feature type="binding site" evidence="1">
    <location>
        <position position="82"/>
    </location>
    <ligand>
        <name>Zn(2+)</name>
        <dbReference type="ChEBI" id="CHEBI:29105"/>
    </ligand>
</feature>
<organism>
    <name type="scientific">Salmonella paratyphi C (strain RKS4594)</name>
    <dbReference type="NCBI Taxonomy" id="476213"/>
    <lineage>
        <taxon>Bacteria</taxon>
        <taxon>Pseudomonadati</taxon>
        <taxon>Pseudomonadota</taxon>
        <taxon>Gammaproteobacteria</taxon>
        <taxon>Enterobacterales</taxon>
        <taxon>Enterobacteriaceae</taxon>
        <taxon>Salmonella</taxon>
    </lineage>
</organism>
<dbReference type="EMBL" id="CP000857">
    <property type="protein sequence ID" value="ACN47243.1"/>
    <property type="molecule type" value="Genomic_DNA"/>
</dbReference>
<dbReference type="RefSeq" id="WP_000856777.1">
    <property type="nucleotide sequence ID" value="NC_012125.1"/>
</dbReference>
<dbReference type="KEGG" id="sei:SPC_3157"/>
<dbReference type="HOGENOM" id="CLU_113336_0_1_6"/>
<dbReference type="Proteomes" id="UP000001599">
    <property type="component" value="Chromosome"/>
</dbReference>
<dbReference type="GO" id="GO:0005737">
    <property type="term" value="C:cytoplasm"/>
    <property type="evidence" value="ECO:0007669"/>
    <property type="project" value="UniProtKB-SubCell"/>
</dbReference>
<dbReference type="GO" id="GO:0008270">
    <property type="term" value="F:zinc ion binding"/>
    <property type="evidence" value="ECO:0007669"/>
    <property type="project" value="UniProtKB-UniRule"/>
</dbReference>
<dbReference type="GO" id="GO:0006950">
    <property type="term" value="P:response to stress"/>
    <property type="evidence" value="ECO:0007669"/>
    <property type="project" value="UniProtKB-ARBA"/>
</dbReference>
<dbReference type="HAMAP" id="MF_00746">
    <property type="entry name" value="SprT"/>
    <property type="match status" value="1"/>
</dbReference>
<dbReference type="InterPro" id="IPR006640">
    <property type="entry name" value="SprT-like_domain"/>
</dbReference>
<dbReference type="InterPro" id="IPR023483">
    <property type="entry name" value="Uncharacterised_SprT"/>
</dbReference>
<dbReference type="NCBIfam" id="NF003421">
    <property type="entry name" value="PRK04860.1"/>
    <property type="match status" value="1"/>
</dbReference>
<dbReference type="PANTHER" id="PTHR38773">
    <property type="entry name" value="PROTEIN SPRT"/>
    <property type="match status" value="1"/>
</dbReference>
<dbReference type="PANTHER" id="PTHR38773:SF1">
    <property type="entry name" value="PROTEIN SPRT"/>
    <property type="match status" value="1"/>
</dbReference>
<dbReference type="Pfam" id="PF10263">
    <property type="entry name" value="SprT-like"/>
    <property type="match status" value="1"/>
</dbReference>
<dbReference type="SMART" id="SM00731">
    <property type="entry name" value="SprT"/>
    <property type="match status" value="1"/>
</dbReference>
<dbReference type="PROSITE" id="PS00142">
    <property type="entry name" value="ZINC_PROTEASE"/>
    <property type="match status" value="1"/>
</dbReference>
<gene>
    <name evidence="1" type="primary">sprT</name>
    <name type="ordered locus">SPC_3157</name>
</gene>
<protein>
    <recommendedName>
        <fullName evidence="1">Protein SprT</fullName>
    </recommendedName>
</protein>
<sequence length="165" mass="19220">MKTPRLPIAIQQAVMRRLRENLAQANLKLDRHYPEPKLVYTQRGTSAGTAWLESYEIRLNPVLLLENIDTFIAEVVPHELAHLLVWKHFGRKAPHGKEWKWMMESVLGVPARRTHQFALQSVRRNTFPYHCQCQQNQLTVRRHNRVVRGEAVYRCVHCGEPLVAG</sequence>
<name>SPRT_SALPC</name>
<comment type="cofactor">
    <cofactor evidence="1">
        <name>Zn(2+)</name>
        <dbReference type="ChEBI" id="CHEBI:29105"/>
    </cofactor>
    <text evidence="1">Binds 1 zinc ion.</text>
</comment>
<comment type="subcellular location">
    <subcellularLocation>
        <location evidence="1">Cytoplasm</location>
    </subcellularLocation>
</comment>
<comment type="similarity">
    <text evidence="1">Belongs to the SprT family.</text>
</comment>
<reference key="1">
    <citation type="journal article" date="2009" name="PLoS ONE">
        <title>Salmonella paratyphi C: genetic divergence from Salmonella choleraesuis and pathogenic convergence with Salmonella typhi.</title>
        <authorList>
            <person name="Liu W.-Q."/>
            <person name="Feng Y."/>
            <person name="Wang Y."/>
            <person name="Zou Q.-H."/>
            <person name="Chen F."/>
            <person name="Guo J.-T."/>
            <person name="Peng Y.-H."/>
            <person name="Jin Y."/>
            <person name="Li Y.-G."/>
            <person name="Hu S.-N."/>
            <person name="Johnston R.N."/>
            <person name="Liu G.-R."/>
            <person name="Liu S.-L."/>
        </authorList>
    </citation>
    <scope>NUCLEOTIDE SEQUENCE [LARGE SCALE GENOMIC DNA]</scope>
    <source>
        <strain>RKS4594</strain>
    </source>
</reference>
<proteinExistence type="inferred from homology"/>